<dbReference type="EC" id="3.1.3.16"/>
<dbReference type="EMBL" id="CU329670">
    <property type="protein sequence ID" value="CAA16990.1"/>
    <property type="molecule type" value="Genomic_DNA"/>
</dbReference>
<dbReference type="PIR" id="T38235">
    <property type="entry name" value="T38235"/>
</dbReference>
<dbReference type="SMR" id="O42853"/>
<dbReference type="BioGRID" id="278488">
    <property type="interactions" value="1"/>
</dbReference>
<dbReference type="FunCoup" id="O42853">
    <property type="interactions" value="3"/>
</dbReference>
<dbReference type="STRING" id="284812.O42853"/>
<dbReference type="iPTMnet" id="O42853"/>
<dbReference type="PaxDb" id="4896-SPAC23A1.16c.1"/>
<dbReference type="EnsemblFungi" id="SPAC23A1.16c.1">
    <property type="protein sequence ID" value="SPAC23A1.16c.1:pep"/>
    <property type="gene ID" value="SPAC23A1.16c"/>
</dbReference>
<dbReference type="KEGG" id="spo:2542005"/>
<dbReference type="PomBase" id="SPAC23A1.16c"/>
<dbReference type="VEuPathDB" id="FungiDB:SPAC23A1.16c"/>
<dbReference type="eggNOG" id="KOG4780">
    <property type="taxonomic scope" value="Eukaryota"/>
</dbReference>
<dbReference type="HOGENOM" id="CLU_1349593_0_0_1"/>
<dbReference type="InParanoid" id="O42853"/>
<dbReference type="OMA" id="LWIRERA"/>
<dbReference type="PhylomeDB" id="O42853"/>
<dbReference type="PRO" id="PR:O42853"/>
<dbReference type="Proteomes" id="UP000002485">
    <property type="component" value="Chromosome I"/>
</dbReference>
<dbReference type="GO" id="GO:0005829">
    <property type="term" value="C:cytosol"/>
    <property type="evidence" value="ECO:0007005"/>
    <property type="project" value="PomBase"/>
</dbReference>
<dbReference type="GO" id="GO:0005634">
    <property type="term" value="C:nucleus"/>
    <property type="evidence" value="ECO:0000255"/>
    <property type="project" value="PomBase"/>
</dbReference>
<dbReference type="GO" id="GO:0043175">
    <property type="term" value="F:RNA polymerase core enzyme binding"/>
    <property type="evidence" value="ECO:0000255"/>
    <property type="project" value="PomBase"/>
</dbReference>
<dbReference type="GO" id="GO:0008420">
    <property type="term" value="F:RNA polymerase II CTD heptapeptide repeat phosphatase activity"/>
    <property type="evidence" value="ECO:0000266"/>
    <property type="project" value="PomBase"/>
</dbReference>
<dbReference type="GO" id="GO:0008270">
    <property type="term" value="F:zinc ion binding"/>
    <property type="evidence" value="ECO:0007669"/>
    <property type="project" value="UniProtKB-KW"/>
</dbReference>
<dbReference type="GO" id="GO:0023052">
    <property type="term" value="P:signaling"/>
    <property type="evidence" value="ECO:0000303"/>
    <property type="project" value="PomBase"/>
</dbReference>
<dbReference type="GO" id="GO:0006366">
    <property type="term" value="P:transcription by RNA polymerase II"/>
    <property type="evidence" value="ECO:0000255"/>
    <property type="project" value="PomBase"/>
</dbReference>
<dbReference type="Gene3D" id="1.25.40.820">
    <property type="match status" value="1"/>
</dbReference>
<dbReference type="InterPro" id="IPR039693">
    <property type="entry name" value="Rtr1/RPAP2"/>
</dbReference>
<dbReference type="InterPro" id="IPR007308">
    <property type="entry name" value="Rtr1/RPAP2_dom"/>
</dbReference>
<dbReference type="InterPro" id="IPR038534">
    <property type="entry name" value="Rtr1/RPAP2_sf"/>
</dbReference>
<dbReference type="PANTHER" id="PTHR14732">
    <property type="entry name" value="RNA POLYMERASE II SUBUNIT B1 CTD PHOSPHATASE RPAP2-RELATED"/>
    <property type="match status" value="1"/>
</dbReference>
<dbReference type="PANTHER" id="PTHR14732:SF0">
    <property type="entry name" value="RNA POLYMERASE II SUBUNIT B1 CTD PHOSPHATASE RPAP2-RELATED"/>
    <property type="match status" value="1"/>
</dbReference>
<dbReference type="Pfam" id="PF04181">
    <property type="entry name" value="RPAP2_Rtr1"/>
    <property type="match status" value="1"/>
</dbReference>
<dbReference type="PROSITE" id="PS51479">
    <property type="entry name" value="ZF_RTR1"/>
    <property type="match status" value="1"/>
</dbReference>
<gene>
    <name type="ORF">SPAC23A1.16c</name>
</gene>
<name>RPAP2_SCHPO</name>
<feature type="chain" id="PRO_0000317210" description="Putative RNA polymerase II subunit B1 CTD phosphatase rtr1">
    <location>
        <begin position="1"/>
        <end position="197"/>
    </location>
</feature>
<feature type="zinc finger region" description="RTR1-type" evidence="2">
    <location>
        <begin position="60"/>
        <end position="139"/>
    </location>
</feature>
<feature type="binding site" evidence="2">
    <location>
        <position position="83"/>
    </location>
    <ligand>
        <name>Zn(2+)</name>
        <dbReference type="ChEBI" id="CHEBI:29105"/>
    </ligand>
</feature>
<feature type="binding site" evidence="2">
    <location>
        <position position="88"/>
    </location>
    <ligand>
        <name>Zn(2+)</name>
        <dbReference type="ChEBI" id="CHEBI:29105"/>
    </ligand>
</feature>
<feature type="binding site" evidence="2">
    <location>
        <position position="115"/>
    </location>
    <ligand>
        <name>Zn(2+)</name>
        <dbReference type="ChEBI" id="CHEBI:29105"/>
    </ligand>
</feature>
<feature type="binding site" evidence="2">
    <location>
        <position position="119"/>
    </location>
    <ligand>
        <name>Zn(2+)</name>
        <dbReference type="ChEBI" id="CHEBI:29105"/>
    </ligand>
</feature>
<protein>
    <recommendedName>
        <fullName>Putative RNA polymerase II subunit B1 CTD phosphatase rtr1</fullName>
        <ecNumber>3.1.3.16</ecNumber>
    </recommendedName>
    <alternativeName>
        <fullName>RNA polymerase II-associated protein 2 homolog rtr1</fullName>
    </alternativeName>
</protein>
<reference key="1">
    <citation type="journal article" date="2002" name="Nature">
        <title>The genome sequence of Schizosaccharomyces pombe.</title>
        <authorList>
            <person name="Wood V."/>
            <person name="Gwilliam R."/>
            <person name="Rajandream M.A."/>
            <person name="Lyne M.H."/>
            <person name="Lyne R."/>
            <person name="Stewart A."/>
            <person name="Sgouros J.G."/>
            <person name="Peat N."/>
            <person name="Hayles J."/>
            <person name="Baker S.G."/>
            <person name="Basham D."/>
            <person name="Bowman S."/>
            <person name="Brooks K."/>
            <person name="Brown D."/>
            <person name="Brown S."/>
            <person name="Chillingworth T."/>
            <person name="Churcher C.M."/>
            <person name="Collins M."/>
            <person name="Connor R."/>
            <person name="Cronin A."/>
            <person name="Davis P."/>
            <person name="Feltwell T."/>
            <person name="Fraser A."/>
            <person name="Gentles S."/>
            <person name="Goble A."/>
            <person name="Hamlin N."/>
            <person name="Harris D.E."/>
            <person name="Hidalgo J."/>
            <person name="Hodgson G."/>
            <person name="Holroyd S."/>
            <person name="Hornsby T."/>
            <person name="Howarth S."/>
            <person name="Huckle E.J."/>
            <person name="Hunt S."/>
            <person name="Jagels K."/>
            <person name="James K.D."/>
            <person name="Jones L."/>
            <person name="Jones M."/>
            <person name="Leather S."/>
            <person name="McDonald S."/>
            <person name="McLean J."/>
            <person name="Mooney P."/>
            <person name="Moule S."/>
            <person name="Mungall K.L."/>
            <person name="Murphy L.D."/>
            <person name="Niblett D."/>
            <person name="Odell C."/>
            <person name="Oliver K."/>
            <person name="O'Neil S."/>
            <person name="Pearson D."/>
            <person name="Quail M.A."/>
            <person name="Rabbinowitsch E."/>
            <person name="Rutherford K.M."/>
            <person name="Rutter S."/>
            <person name="Saunders D."/>
            <person name="Seeger K."/>
            <person name="Sharp S."/>
            <person name="Skelton J."/>
            <person name="Simmonds M.N."/>
            <person name="Squares R."/>
            <person name="Squares S."/>
            <person name="Stevens K."/>
            <person name="Taylor K."/>
            <person name="Taylor R.G."/>
            <person name="Tivey A."/>
            <person name="Walsh S.V."/>
            <person name="Warren T."/>
            <person name="Whitehead S."/>
            <person name="Woodward J.R."/>
            <person name="Volckaert G."/>
            <person name="Aert R."/>
            <person name="Robben J."/>
            <person name="Grymonprez B."/>
            <person name="Weltjens I."/>
            <person name="Vanstreels E."/>
            <person name="Rieger M."/>
            <person name="Schaefer M."/>
            <person name="Mueller-Auer S."/>
            <person name="Gabel C."/>
            <person name="Fuchs M."/>
            <person name="Duesterhoeft A."/>
            <person name="Fritzc C."/>
            <person name="Holzer E."/>
            <person name="Moestl D."/>
            <person name="Hilbert H."/>
            <person name="Borzym K."/>
            <person name="Langer I."/>
            <person name="Beck A."/>
            <person name="Lehrach H."/>
            <person name="Reinhardt R."/>
            <person name="Pohl T.M."/>
            <person name="Eger P."/>
            <person name="Zimmermann W."/>
            <person name="Wedler H."/>
            <person name="Wambutt R."/>
            <person name="Purnelle B."/>
            <person name="Goffeau A."/>
            <person name="Cadieu E."/>
            <person name="Dreano S."/>
            <person name="Gloux S."/>
            <person name="Lelaure V."/>
            <person name="Mottier S."/>
            <person name="Galibert F."/>
            <person name="Aves S.J."/>
            <person name="Xiang Z."/>
            <person name="Hunt C."/>
            <person name="Moore K."/>
            <person name="Hurst S.M."/>
            <person name="Lucas M."/>
            <person name="Rochet M."/>
            <person name="Gaillardin C."/>
            <person name="Tallada V.A."/>
            <person name="Garzon A."/>
            <person name="Thode G."/>
            <person name="Daga R.R."/>
            <person name="Cruzado L."/>
            <person name="Jimenez J."/>
            <person name="Sanchez M."/>
            <person name="del Rey F."/>
            <person name="Benito J."/>
            <person name="Dominguez A."/>
            <person name="Revuelta J.L."/>
            <person name="Moreno S."/>
            <person name="Armstrong J."/>
            <person name="Forsburg S.L."/>
            <person name="Cerutti L."/>
            <person name="Lowe T."/>
            <person name="McCombie W.R."/>
            <person name="Paulsen I."/>
            <person name="Potashkin J."/>
            <person name="Shpakovski G.V."/>
            <person name="Ussery D."/>
            <person name="Barrell B.G."/>
            <person name="Nurse P."/>
        </authorList>
    </citation>
    <scope>NUCLEOTIDE SEQUENCE [LARGE SCALE GENOMIC DNA]</scope>
    <source>
        <strain>972 / ATCC 24843</strain>
    </source>
</reference>
<reference key="2">
    <citation type="journal article" date="2006" name="Nat. Biotechnol.">
        <title>ORFeome cloning and global analysis of protein localization in the fission yeast Schizosaccharomyces pombe.</title>
        <authorList>
            <person name="Matsuyama A."/>
            <person name="Arai R."/>
            <person name="Yashiroda Y."/>
            <person name="Shirai A."/>
            <person name="Kamata A."/>
            <person name="Sekido S."/>
            <person name="Kobayashi Y."/>
            <person name="Hashimoto A."/>
            <person name="Hamamoto M."/>
            <person name="Hiraoka Y."/>
            <person name="Horinouchi S."/>
            <person name="Yoshida M."/>
        </authorList>
    </citation>
    <scope>SUBCELLULAR LOCATION [LARGE SCALE ANALYSIS]</scope>
</reference>
<organism>
    <name type="scientific">Schizosaccharomyces pombe (strain 972 / ATCC 24843)</name>
    <name type="common">Fission yeast</name>
    <dbReference type="NCBI Taxonomy" id="284812"/>
    <lineage>
        <taxon>Eukaryota</taxon>
        <taxon>Fungi</taxon>
        <taxon>Dikarya</taxon>
        <taxon>Ascomycota</taxon>
        <taxon>Taphrinomycotina</taxon>
        <taxon>Schizosaccharomycetes</taxon>
        <taxon>Schizosaccharomycetales</taxon>
        <taxon>Schizosaccharomycetaceae</taxon>
        <taxon>Schizosaccharomyces</taxon>
    </lineage>
</organism>
<proteinExistence type="inferred from homology"/>
<keyword id="KW-0963">Cytoplasm</keyword>
<keyword id="KW-0378">Hydrolase</keyword>
<keyword id="KW-0479">Metal-binding</keyword>
<keyword id="KW-0539">Nucleus</keyword>
<keyword id="KW-0904">Protein phosphatase</keyword>
<keyword id="KW-1185">Reference proteome</keyword>
<keyword id="KW-0804">Transcription</keyword>
<keyword id="KW-0805">Transcription regulation</keyword>
<keyword id="KW-0862">Zinc</keyword>
<keyword id="KW-0863">Zinc-finger</keyword>
<comment type="function">
    <text evidence="1">Putative RNA polymerase II subunit B1 C-terminal domain (CTD) phosphatase involved in RNA polymerase II transcription regulation.</text>
</comment>
<comment type="catalytic activity">
    <reaction>
        <text>O-phospho-L-seryl-[protein] + H2O = L-seryl-[protein] + phosphate</text>
        <dbReference type="Rhea" id="RHEA:20629"/>
        <dbReference type="Rhea" id="RHEA-COMP:9863"/>
        <dbReference type="Rhea" id="RHEA-COMP:11604"/>
        <dbReference type="ChEBI" id="CHEBI:15377"/>
        <dbReference type="ChEBI" id="CHEBI:29999"/>
        <dbReference type="ChEBI" id="CHEBI:43474"/>
        <dbReference type="ChEBI" id="CHEBI:83421"/>
        <dbReference type="EC" id="3.1.3.16"/>
    </reaction>
</comment>
<comment type="catalytic activity">
    <reaction>
        <text>O-phospho-L-threonyl-[protein] + H2O = L-threonyl-[protein] + phosphate</text>
        <dbReference type="Rhea" id="RHEA:47004"/>
        <dbReference type="Rhea" id="RHEA-COMP:11060"/>
        <dbReference type="Rhea" id="RHEA-COMP:11605"/>
        <dbReference type="ChEBI" id="CHEBI:15377"/>
        <dbReference type="ChEBI" id="CHEBI:30013"/>
        <dbReference type="ChEBI" id="CHEBI:43474"/>
        <dbReference type="ChEBI" id="CHEBI:61977"/>
        <dbReference type="EC" id="3.1.3.16"/>
    </reaction>
</comment>
<comment type="subcellular location">
    <subcellularLocation>
        <location evidence="3">Cytoplasm</location>
    </subcellularLocation>
    <subcellularLocation>
        <location evidence="5">Nucleus</location>
    </subcellularLocation>
</comment>
<comment type="similarity">
    <text evidence="2 4">Belongs to the RPAP2 family.</text>
</comment>
<sequence>MNKKSILKKPKNAQSTQEKQLITWSKSLIDEARSRLQYDFFALEWIEKLVDPVSLETLEEARKYLRKSDYDQVVKERKLVNLCGYPVCPYEPKQQTRYKLEDSGMKVYGGLNYYCSKDCFLKSCQYMVELSDEPLWIREDAREAMKQHLDPRQDEAFRKELENKKIEDVRLLLQALPVGYKAKVGEIVEHPLANEQS</sequence>
<accession>O42853</accession>
<evidence type="ECO:0000250" key="1"/>
<evidence type="ECO:0000255" key="2">
    <source>
        <dbReference type="PROSITE-ProRule" id="PRU00812"/>
    </source>
</evidence>
<evidence type="ECO:0000269" key="3">
    <source>
    </source>
</evidence>
<evidence type="ECO:0000305" key="4"/>
<evidence type="ECO:0000305" key="5">
    <source>
    </source>
</evidence>